<gene>
    <name evidence="1" type="primary">mutS</name>
    <name type="ordered locus">BamMC406_1998</name>
</gene>
<feature type="chain" id="PRO_1000093609" description="DNA mismatch repair protein MutS">
    <location>
        <begin position="1"/>
        <end position="885"/>
    </location>
</feature>
<feature type="binding site" evidence="1">
    <location>
        <begin position="626"/>
        <end position="633"/>
    </location>
    <ligand>
        <name>ATP</name>
        <dbReference type="ChEBI" id="CHEBI:30616"/>
    </ligand>
</feature>
<sequence>MTTLSPEAFAGHTPMMQQYLRIKADHPDTLVFYRMGDFYELFFEDAEKAARLLDLTLTQRGASAGTPIKMAGVPHHAVEQYLAKLVKMGESVAICEQIGDPATSKGPVERKVVRVVTPGTLTDAALLSDKNDVYLLAMCTGHNKRGVAVNIGLAWLNLASGALRLAEIEPDQLGAALERIRPAEILTADGATDTVPAGAGAIKRVPAWHFDIASGTQRLCDQLDVAGLDGFGAHSLTSACGAAGALLLYAAATQGQQLRHVRSLKVENETEYIGLDPATRRNLELTETLRGTESPTLYSLLDTCCTTMGSRLLRHWLHHPPRASVAAQSRQQAIGALLDAPADASLDALRSALRQIADVERITGRLALLSARPRDLSSLRDTFAALPALRERISAIVANADALTRVDAALAPPAECLDLLTSAIAPEPAAMVRDGGVIARGYDAELDELRDISENCGQFLIDLEARERTRTGIANLRVEYNKVHGFYIEVTRGQTDKVPDDYRRRQTLKNAERYITPELKTFEDKALSAQERALARERALYDGVLQALLPFIPECQRVASALAELDVLAAFAERARTLDWVAPTFTDEIGIEIEQGRHPVVEAQVEQFIANDCRFGAERKLLLITGPNMGGKSTFMRQTALIALMAYVGSYVPAKSACFGPIDRIFTRIGAADDLAGGRSTFMVEMTEAAAILNDATPQSLVLMDEIGRGTSTFDGLALAWAIARHLLAQNGCYTLFATHYFELTQLPAEFPQAANVHLSAVEHGHGIVFLHAVNEGPANQSYGLQVAQLAGVPAPVIRAARKHLAYLEQQSATQNTPQLDLFSAPPAAADELECADAPAVSAIPHPALEKLRDIDPDDLKPRDALDLLYELRTLVRSHDADGHA</sequence>
<protein>
    <recommendedName>
        <fullName evidence="1">DNA mismatch repair protein MutS</fullName>
    </recommendedName>
</protein>
<evidence type="ECO:0000255" key="1">
    <source>
        <dbReference type="HAMAP-Rule" id="MF_00096"/>
    </source>
</evidence>
<keyword id="KW-0067">ATP-binding</keyword>
<keyword id="KW-0227">DNA damage</keyword>
<keyword id="KW-0234">DNA repair</keyword>
<keyword id="KW-0238">DNA-binding</keyword>
<keyword id="KW-0547">Nucleotide-binding</keyword>
<proteinExistence type="inferred from homology"/>
<dbReference type="EMBL" id="CP001025">
    <property type="protein sequence ID" value="ACB64479.1"/>
    <property type="molecule type" value="Genomic_DNA"/>
</dbReference>
<dbReference type="RefSeq" id="WP_012364196.1">
    <property type="nucleotide sequence ID" value="NC_010551.1"/>
</dbReference>
<dbReference type="SMR" id="B1YSP3"/>
<dbReference type="KEGG" id="bac:BamMC406_1998"/>
<dbReference type="HOGENOM" id="CLU_002472_4_0_4"/>
<dbReference type="OrthoDB" id="9802448at2"/>
<dbReference type="Proteomes" id="UP000001680">
    <property type="component" value="Chromosome 1"/>
</dbReference>
<dbReference type="GO" id="GO:0005829">
    <property type="term" value="C:cytosol"/>
    <property type="evidence" value="ECO:0007669"/>
    <property type="project" value="TreeGrafter"/>
</dbReference>
<dbReference type="GO" id="GO:0005524">
    <property type="term" value="F:ATP binding"/>
    <property type="evidence" value="ECO:0007669"/>
    <property type="project" value="UniProtKB-UniRule"/>
</dbReference>
<dbReference type="GO" id="GO:0140664">
    <property type="term" value="F:ATP-dependent DNA damage sensor activity"/>
    <property type="evidence" value="ECO:0007669"/>
    <property type="project" value="InterPro"/>
</dbReference>
<dbReference type="GO" id="GO:0003684">
    <property type="term" value="F:damaged DNA binding"/>
    <property type="evidence" value="ECO:0007669"/>
    <property type="project" value="UniProtKB-UniRule"/>
</dbReference>
<dbReference type="GO" id="GO:0030983">
    <property type="term" value="F:mismatched DNA binding"/>
    <property type="evidence" value="ECO:0007669"/>
    <property type="project" value="InterPro"/>
</dbReference>
<dbReference type="GO" id="GO:0006298">
    <property type="term" value="P:mismatch repair"/>
    <property type="evidence" value="ECO:0007669"/>
    <property type="project" value="UniProtKB-UniRule"/>
</dbReference>
<dbReference type="CDD" id="cd03284">
    <property type="entry name" value="ABC_MutS1"/>
    <property type="match status" value="1"/>
</dbReference>
<dbReference type="FunFam" id="3.40.1170.10:FF:000001">
    <property type="entry name" value="DNA mismatch repair protein MutS"/>
    <property type="match status" value="1"/>
</dbReference>
<dbReference type="FunFam" id="3.40.50.300:FF:000870">
    <property type="entry name" value="MutS protein homolog 4"/>
    <property type="match status" value="1"/>
</dbReference>
<dbReference type="Gene3D" id="1.10.1420.10">
    <property type="match status" value="2"/>
</dbReference>
<dbReference type="Gene3D" id="6.10.140.430">
    <property type="match status" value="1"/>
</dbReference>
<dbReference type="Gene3D" id="3.40.1170.10">
    <property type="entry name" value="DNA repair protein MutS, domain I"/>
    <property type="match status" value="1"/>
</dbReference>
<dbReference type="Gene3D" id="3.30.420.110">
    <property type="entry name" value="MutS, connector domain"/>
    <property type="match status" value="1"/>
</dbReference>
<dbReference type="Gene3D" id="3.40.50.300">
    <property type="entry name" value="P-loop containing nucleotide triphosphate hydrolases"/>
    <property type="match status" value="1"/>
</dbReference>
<dbReference type="HAMAP" id="MF_00096">
    <property type="entry name" value="MutS"/>
    <property type="match status" value="1"/>
</dbReference>
<dbReference type="InterPro" id="IPR005748">
    <property type="entry name" value="DNA_mismatch_repair_MutS"/>
</dbReference>
<dbReference type="InterPro" id="IPR007695">
    <property type="entry name" value="DNA_mismatch_repair_MutS-lik_N"/>
</dbReference>
<dbReference type="InterPro" id="IPR017261">
    <property type="entry name" value="DNA_mismatch_repair_MutS/MSH"/>
</dbReference>
<dbReference type="InterPro" id="IPR000432">
    <property type="entry name" value="DNA_mismatch_repair_MutS_C"/>
</dbReference>
<dbReference type="InterPro" id="IPR007861">
    <property type="entry name" value="DNA_mismatch_repair_MutS_clamp"/>
</dbReference>
<dbReference type="InterPro" id="IPR007696">
    <property type="entry name" value="DNA_mismatch_repair_MutS_core"/>
</dbReference>
<dbReference type="InterPro" id="IPR016151">
    <property type="entry name" value="DNA_mismatch_repair_MutS_N"/>
</dbReference>
<dbReference type="InterPro" id="IPR036187">
    <property type="entry name" value="DNA_mismatch_repair_MutS_sf"/>
</dbReference>
<dbReference type="InterPro" id="IPR007860">
    <property type="entry name" value="DNA_mmatch_repair_MutS_con_dom"/>
</dbReference>
<dbReference type="InterPro" id="IPR045076">
    <property type="entry name" value="MutS"/>
</dbReference>
<dbReference type="InterPro" id="IPR036678">
    <property type="entry name" value="MutS_con_dom_sf"/>
</dbReference>
<dbReference type="InterPro" id="IPR027417">
    <property type="entry name" value="P-loop_NTPase"/>
</dbReference>
<dbReference type="NCBIfam" id="TIGR01070">
    <property type="entry name" value="mutS1"/>
    <property type="match status" value="1"/>
</dbReference>
<dbReference type="NCBIfam" id="NF003810">
    <property type="entry name" value="PRK05399.1"/>
    <property type="match status" value="1"/>
</dbReference>
<dbReference type="PANTHER" id="PTHR11361:SF34">
    <property type="entry name" value="DNA MISMATCH REPAIR PROTEIN MSH1, MITOCHONDRIAL"/>
    <property type="match status" value="1"/>
</dbReference>
<dbReference type="PANTHER" id="PTHR11361">
    <property type="entry name" value="DNA MISMATCH REPAIR PROTEIN MUTS FAMILY MEMBER"/>
    <property type="match status" value="1"/>
</dbReference>
<dbReference type="Pfam" id="PF01624">
    <property type="entry name" value="MutS_I"/>
    <property type="match status" value="1"/>
</dbReference>
<dbReference type="Pfam" id="PF05188">
    <property type="entry name" value="MutS_II"/>
    <property type="match status" value="1"/>
</dbReference>
<dbReference type="Pfam" id="PF05192">
    <property type="entry name" value="MutS_III"/>
    <property type="match status" value="1"/>
</dbReference>
<dbReference type="Pfam" id="PF05190">
    <property type="entry name" value="MutS_IV"/>
    <property type="match status" value="1"/>
</dbReference>
<dbReference type="Pfam" id="PF00488">
    <property type="entry name" value="MutS_V"/>
    <property type="match status" value="1"/>
</dbReference>
<dbReference type="PIRSF" id="PIRSF037677">
    <property type="entry name" value="DNA_mis_repair_Msh6"/>
    <property type="match status" value="1"/>
</dbReference>
<dbReference type="SMART" id="SM00534">
    <property type="entry name" value="MUTSac"/>
    <property type="match status" value="1"/>
</dbReference>
<dbReference type="SMART" id="SM00533">
    <property type="entry name" value="MUTSd"/>
    <property type="match status" value="1"/>
</dbReference>
<dbReference type="SUPFAM" id="SSF55271">
    <property type="entry name" value="DNA repair protein MutS, domain I"/>
    <property type="match status" value="1"/>
</dbReference>
<dbReference type="SUPFAM" id="SSF53150">
    <property type="entry name" value="DNA repair protein MutS, domain II"/>
    <property type="match status" value="1"/>
</dbReference>
<dbReference type="SUPFAM" id="SSF48334">
    <property type="entry name" value="DNA repair protein MutS, domain III"/>
    <property type="match status" value="1"/>
</dbReference>
<dbReference type="SUPFAM" id="SSF52540">
    <property type="entry name" value="P-loop containing nucleoside triphosphate hydrolases"/>
    <property type="match status" value="1"/>
</dbReference>
<dbReference type="PROSITE" id="PS00486">
    <property type="entry name" value="DNA_MISMATCH_REPAIR_2"/>
    <property type="match status" value="1"/>
</dbReference>
<accession>B1YSP3</accession>
<comment type="function">
    <text evidence="1">This protein is involved in the repair of mismatches in DNA. It is possible that it carries out the mismatch recognition step. This protein has a weak ATPase activity.</text>
</comment>
<comment type="similarity">
    <text evidence="1">Belongs to the DNA mismatch repair MutS family.</text>
</comment>
<name>MUTS_BURA4</name>
<organism>
    <name type="scientific">Burkholderia ambifaria (strain MC40-6)</name>
    <dbReference type="NCBI Taxonomy" id="398577"/>
    <lineage>
        <taxon>Bacteria</taxon>
        <taxon>Pseudomonadati</taxon>
        <taxon>Pseudomonadota</taxon>
        <taxon>Betaproteobacteria</taxon>
        <taxon>Burkholderiales</taxon>
        <taxon>Burkholderiaceae</taxon>
        <taxon>Burkholderia</taxon>
        <taxon>Burkholderia cepacia complex</taxon>
    </lineage>
</organism>
<reference key="1">
    <citation type="submission" date="2008-04" db="EMBL/GenBank/DDBJ databases">
        <title>Complete sequence of chromosome 1 of Burkholderia ambifaria MC40-6.</title>
        <authorList>
            <person name="Copeland A."/>
            <person name="Lucas S."/>
            <person name="Lapidus A."/>
            <person name="Glavina del Rio T."/>
            <person name="Dalin E."/>
            <person name="Tice H."/>
            <person name="Pitluck S."/>
            <person name="Chain P."/>
            <person name="Malfatti S."/>
            <person name="Shin M."/>
            <person name="Vergez L."/>
            <person name="Lang D."/>
            <person name="Schmutz J."/>
            <person name="Larimer F."/>
            <person name="Land M."/>
            <person name="Hauser L."/>
            <person name="Kyrpides N."/>
            <person name="Lykidis A."/>
            <person name="Ramette A."/>
            <person name="Konstantinidis K."/>
            <person name="Tiedje J."/>
            <person name="Richardson P."/>
        </authorList>
    </citation>
    <scope>NUCLEOTIDE SEQUENCE [LARGE SCALE GENOMIC DNA]</scope>
    <source>
        <strain>MC40-6</strain>
    </source>
</reference>